<feature type="chain" id="PRO_1000022632" description="ATP-dependent Clp protease adapter protein ClpS">
    <location>
        <begin position="1"/>
        <end position="104"/>
    </location>
</feature>
<proteinExistence type="inferred from homology"/>
<protein>
    <recommendedName>
        <fullName evidence="1">ATP-dependent Clp protease adapter protein ClpS</fullName>
    </recommendedName>
</protein>
<gene>
    <name evidence="1" type="primary">clpS</name>
    <name type="ordered locus">Tcr_1111</name>
</gene>
<dbReference type="EMBL" id="CP000109">
    <property type="protein sequence ID" value="ABB41706.1"/>
    <property type="molecule type" value="Genomic_DNA"/>
</dbReference>
<dbReference type="SMR" id="Q31GL7"/>
<dbReference type="STRING" id="317025.Tcr_1111"/>
<dbReference type="KEGG" id="tcx:Tcr_1111"/>
<dbReference type="eggNOG" id="COG2127">
    <property type="taxonomic scope" value="Bacteria"/>
</dbReference>
<dbReference type="HOGENOM" id="CLU_134358_2_1_6"/>
<dbReference type="OrthoDB" id="9796121at2"/>
<dbReference type="GO" id="GO:0030163">
    <property type="term" value="P:protein catabolic process"/>
    <property type="evidence" value="ECO:0007669"/>
    <property type="project" value="InterPro"/>
</dbReference>
<dbReference type="GO" id="GO:0006508">
    <property type="term" value="P:proteolysis"/>
    <property type="evidence" value="ECO:0007669"/>
    <property type="project" value="UniProtKB-UniRule"/>
</dbReference>
<dbReference type="FunFam" id="3.30.1390.10:FF:000002">
    <property type="entry name" value="ATP-dependent Clp protease adapter protein ClpS"/>
    <property type="match status" value="1"/>
</dbReference>
<dbReference type="Gene3D" id="3.30.1390.10">
    <property type="match status" value="1"/>
</dbReference>
<dbReference type="HAMAP" id="MF_00302">
    <property type="entry name" value="ClpS"/>
    <property type="match status" value="1"/>
</dbReference>
<dbReference type="InterPro" id="IPR022935">
    <property type="entry name" value="ClpS"/>
</dbReference>
<dbReference type="InterPro" id="IPR003769">
    <property type="entry name" value="ClpS_core"/>
</dbReference>
<dbReference type="InterPro" id="IPR014719">
    <property type="entry name" value="Ribosomal_bL12_C/ClpS-like"/>
</dbReference>
<dbReference type="NCBIfam" id="NF000672">
    <property type="entry name" value="PRK00033.1-5"/>
    <property type="match status" value="1"/>
</dbReference>
<dbReference type="PANTHER" id="PTHR33473:SF19">
    <property type="entry name" value="ATP-DEPENDENT CLP PROTEASE ADAPTER PROTEIN CLPS"/>
    <property type="match status" value="1"/>
</dbReference>
<dbReference type="PANTHER" id="PTHR33473">
    <property type="entry name" value="ATP-DEPENDENT CLP PROTEASE ADAPTER PROTEIN CLPS1, CHLOROPLASTIC"/>
    <property type="match status" value="1"/>
</dbReference>
<dbReference type="Pfam" id="PF02617">
    <property type="entry name" value="ClpS"/>
    <property type="match status" value="1"/>
</dbReference>
<dbReference type="SUPFAM" id="SSF54736">
    <property type="entry name" value="ClpS-like"/>
    <property type="match status" value="1"/>
</dbReference>
<comment type="function">
    <text evidence="1">Involved in the modulation of the specificity of the ClpAP-mediated ATP-dependent protein degradation.</text>
</comment>
<comment type="subunit">
    <text evidence="1">Binds to the N-terminal domain of the chaperone ClpA.</text>
</comment>
<comment type="similarity">
    <text evidence="1">Belongs to the ClpS family.</text>
</comment>
<organism>
    <name type="scientific">Hydrogenovibrio crunogenus (strain DSM 25203 / XCL-2)</name>
    <name type="common">Thiomicrospira crunogena</name>
    <dbReference type="NCBI Taxonomy" id="317025"/>
    <lineage>
        <taxon>Bacteria</taxon>
        <taxon>Pseudomonadati</taxon>
        <taxon>Pseudomonadota</taxon>
        <taxon>Gammaproteobacteria</taxon>
        <taxon>Thiotrichales</taxon>
        <taxon>Piscirickettsiaceae</taxon>
        <taxon>Hydrogenovibrio</taxon>
    </lineage>
</organism>
<sequence>MPSQPFQDDGVVLETARPKVKPPKRYQVVLLNDDFTPMDFVVDVLTRFFGMDEAKANAVMLAVHTKGKGTCGVYSREVAEMKVMQVNQYAREHQHPLQCEMEVV</sequence>
<name>CLPS_HYDCU</name>
<accession>Q31GL7</accession>
<evidence type="ECO:0000255" key="1">
    <source>
        <dbReference type="HAMAP-Rule" id="MF_00302"/>
    </source>
</evidence>
<reference key="1">
    <citation type="journal article" date="2006" name="PLoS Biol.">
        <title>The genome of deep-sea vent chemolithoautotroph Thiomicrospira crunogena XCL-2.</title>
        <authorList>
            <person name="Scott K.M."/>
            <person name="Sievert S.M."/>
            <person name="Abril F.N."/>
            <person name="Ball L.A."/>
            <person name="Barrett C.J."/>
            <person name="Blake R.A."/>
            <person name="Boller A.J."/>
            <person name="Chain P.S.G."/>
            <person name="Clark J.A."/>
            <person name="Davis C.R."/>
            <person name="Detter C."/>
            <person name="Do K.F."/>
            <person name="Dobrinski K.P."/>
            <person name="Faza B.I."/>
            <person name="Fitzpatrick K.A."/>
            <person name="Freyermuth S.K."/>
            <person name="Harmer T.L."/>
            <person name="Hauser L.J."/>
            <person name="Huegler M."/>
            <person name="Kerfeld C.A."/>
            <person name="Klotz M.G."/>
            <person name="Kong W.W."/>
            <person name="Land M."/>
            <person name="Lapidus A."/>
            <person name="Larimer F.W."/>
            <person name="Longo D.L."/>
            <person name="Lucas S."/>
            <person name="Malfatti S.A."/>
            <person name="Massey S.E."/>
            <person name="Martin D.D."/>
            <person name="McCuddin Z."/>
            <person name="Meyer F."/>
            <person name="Moore J.L."/>
            <person name="Ocampo L.H. Jr."/>
            <person name="Paul J.H."/>
            <person name="Paulsen I.T."/>
            <person name="Reep D.K."/>
            <person name="Ren Q."/>
            <person name="Ross R.L."/>
            <person name="Sato P.Y."/>
            <person name="Thomas P."/>
            <person name="Tinkham L.E."/>
            <person name="Zeruth G.T."/>
        </authorList>
    </citation>
    <scope>NUCLEOTIDE SEQUENCE [LARGE SCALE GENOMIC DNA]</scope>
    <source>
        <strain>DSM 25203 / XCL-2</strain>
    </source>
</reference>